<keyword id="KW-0067">ATP-binding</keyword>
<keyword id="KW-0963">Cytoplasm</keyword>
<keyword id="KW-0227">DNA damage</keyword>
<keyword id="KW-0233">DNA recombination</keyword>
<keyword id="KW-0234">DNA repair</keyword>
<keyword id="KW-0238">DNA-binding</keyword>
<keyword id="KW-0378">Hydrolase</keyword>
<keyword id="KW-0547">Nucleotide-binding</keyword>
<feature type="chain" id="PRO_1000074087" description="Holliday junction branch migration complex subunit RuvB">
    <location>
        <begin position="1"/>
        <end position="335"/>
    </location>
</feature>
<feature type="region of interest" description="Large ATPase domain (RuvB-L)" evidence="1">
    <location>
        <begin position="4"/>
        <end position="184"/>
    </location>
</feature>
<feature type="region of interest" description="Small ATPAse domain (RuvB-S)" evidence="1">
    <location>
        <begin position="185"/>
        <end position="255"/>
    </location>
</feature>
<feature type="region of interest" description="Head domain (RuvB-H)" evidence="1">
    <location>
        <begin position="258"/>
        <end position="335"/>
    </location>
</feature>
<feature type="binding site" evidence="1">
    <location>
        <position position="23"/>
    </location>
    <ligand>
        <name>ATP</name>
        <dbReference type="ChEBI" id="CHEBI:30616"/>
    </ligand>
</feature>
<feature type="binding site" evidence="1">
    <location>
        <position position="24"/>
    </location>
    <ligand>
        <name>ATP</name>
        <dbReference type="ChEBI" id="CHEBI:30616"/>
    </ligand>
</feature>
<feature type="binding site" evidence="1">
    <location>
        <position position="65"/>
    </location>
    <ligand>
        <name>ATP</name>
        <dbReference type="ChEBI" id="CHEBI:30616"/>
    </ligand>
</feature>
<feature type="binding site" evidence="1">
    <location>
        <position position="68"/>
    </location>
    <ligand>
        <name>ATP</name>
        <dbReference type="ChEBI" id="CHEBI:30616"/>
    </ligand>
</feature>
<feature type="binding site" evidence="1">
    <location>
        <position position="69"/>
    </location>
    <ligand>
        <name>ATP</name>
        <dbReference type="ChEBI" id="CHEBI:30616"/>
    </ligand>
</feature>
<feature type="binding site" evidence="1">
    <location>
        <position position="69"/>
    </location>
    <ligand>
        <name>Mg(2+)</name>
        <dbReference type="ChEBI" id="CHEBI:18420"/>
    </ligand>
</feature>
<feature type="binding site" evidence="1">
    <location>
        <position position="70"/>
    </location>
    <ligand>
        <name>ATP</name>
        <dbReference type="ChEBI" id="CHEBI:30616"/>
    </ligand>
</feature>
<feature type="binding site" evidence="1">
    <location>
        <begin position="131"/>
        <end position="133"/>
    </location>
    <ligand>
        <name>ATP</name>
        <dbReference type="ChEBI" id="CHEBI:30616"/>
    </ligand>
</feature>
<feature type="binding site" evidence="1">
    <location>
        <position position="174"/>
    </location>
    <ligand>
        <name>ATP</name>
        <dbReference type="ChEBI" id="CHEBI:30616"/>
    </ligand>
</feature>
<feature type="binding site" evidence="1">
    <location>
        <position position="184"/>
    </location>
    <ligand>
        <name>ATP</name>
        <dbReference type="ChEBI" id="CHEBI:30616"/>
    </ligand>
</feature>
<feature type="binding site" evidence="1">
    <location>
        <position position="221"/>
    </location>
    <ligand>
        <name>ATP</name>
        <dbReference type="ChEBI" id="CHEBI:30616"/>
    </ligand>
</feature>
<feature type="binding site" evidence="1">
    <location>
        <position position="294"/>
    </location>
    <ligand>
        <name>DNA</name>
        <dbReference type="ChEBI" id="CHEBI:16991"/>
    </ligand>
</feature>
<feature type="binding site" evidence="1">
    <location>
        <position position="313"/>
    </location>
    <ligand>
        <name>DNA</name>
        <dbReference type="ChEBI" id="CHEBI:16991"/>
    </ligand>
</feature>
<feature type="binding site" evidence="1">
    <location>
        <position position="318"/>
    </location>
    <ligand>
        <name>DNA</name>
        <dbReference type="ChEBI" id="CHEBI:16991"/>
    </ligand>
</feature>
<proteinExistence type="inferred from homology"/>
<dbReference type="EC" id="3.6.4.-" evidence="1"/>
<dbReference type="EMBL" id="CP000947">
    <property type="protein sequence ID" value="ACA31174.1"/>
    <property type="molecule type" value="Genomic_DNA"/>
</dbReference>
<dbReference type="RefSeq" id="WP_011608424.1">
    <property type="nucleotide sequence ID" value="NC_010519.1"/>
</dbReference>
<dbReference type="SMR" id="B0UVK4"/>
<dbReference type="STRING" id="228400.HSM_0143"/>
<dbReference type="GeneID" id="31486421"/>
<dbReference type="KEGG" id="hsm:HSM_0143"/>
<dbReference type="HOGENOM" id="CLU_055599_1_0_6"/>
<dbReference type="GO" id="GO:0005737">
    <property type="term" value="C:cytoplasm"/>
    <property type="evidence" value="ECO:0007669"/>
    <property type="project" value="UniProtKB-SubCell"/>
</dbReference>
<dbReference type="GO" id="GO:0048476">
    <property type="term" value="C:Holliday junction resolvase complex"/>
    <property type="evidence" value="ECO:0007669"/>
    <property type="project" value="UniProtKB-UniRule"/>
</dbReference>
<dbReference type="GO" id="GO:0005524">
    <property type="term" value="F:ATP binding"/>
    <property type="evidence" value="ECO:0007669"/>
    <property type="project" value="UniProtKB-UniRule"/>
</dbReference>
<dbReference type="GO" id="GO:0016887">
    <property type="term" value="F:ATP hydrolysis activity"/>
    <property type="evidence" value="ECO:0007669"/>
    <property type="project" value="InterPro"/>
</dbReference>
<dbReference type="GO" id="GO:0000400">
    <property type="term" value="F:four-way junction DNA binding"/>
    <property type="evidence" value="ECO:0007669"/>
    <property type="project" value="UniProtKB-UniRule"/>
</dbReference>
<dbReference type="GO" id="GO:0009378">
    <property type="term" value="F:four-way junction helicase activity"/>
    <property type="evidence" value="ECO:0007669"/>
    <property type="project" value="InterPro"/>
</dbReference>
<dbReference type="GO" id="GO:0006310">
    <property type="term" value="P:DNA recombination"/>
    <property type="evidence" value="ECO:0007669"/>
    <property type="project" value="UniProtKB-UniRule"/>
</dbReference>
<dbReference type="GO" id="GO:0006281">
    <property type="term" value="P:DNA repair"/>
    <property type="evidence" value="ECO:0007669"/>
    <property type="project" value="UniProtKB-UniRule"/>
</dbReference>
<dbReference type="CDD" id="cd00009">
    <property type="entry name" value="AAA"/>
    <property type="match status" value="1"/>
</dbReference>
<dbReference type="FunFam" id="1.10.10.10:FF:000086">
    <property type="entry name" value="Holliday junction ATP-dependent DNA helicase RuvB"/>
    <property type="match status" value="1"/>
</dbReference>
<dbReference type="FunFam" id="3.40.50.300:FF:000073">
    <property type="entry name" value="Holliday junction ATP-dependent DNA helicase RuvB"/>
    <property type="match status" value="1"/>
</dbReference>
<dbReference type="Gene3D" id="1.10.8.60">
    <property type="match status" value="1"/>
</dbReference>
<dbReference type="Gene3D" id="3.40.50.300">
    <property type="entry name" value="P-loop containing nucleotide triphosphate hydrolases"/>
    <property type="match status" value="1"/>
</dbReference>
<dbReference type="Gene3D" id="1.10.10.10">
    <property type="entry name" value="Winged helix-like DNA-binding domain superfamily/Winged helix DNA-binding domain"/>
    <property type="match status" value="1"/>
</dbReference>
<dbReference type="HAMAP" id="MF_00016">
    <property type="entry name" value="DNA_HJ_migration_RuvB"/>
    <property type="match status" value="1"/>
</dbReference>
<dbReference type="InterPro" id="IPR003593">
    <property type="entry name" value="AAA+_ATPase"/>
</dbReference>
<dbReference type="InterPro" id="IPR041445">
    <property type="entry name" value="AAA_lid_4"/>
</dbReference>
<dbReference type="InterPro" id="IPR004605">
    <property type="entry name" value="DNA_helicase_Holl-junc_RuvB"/>
</dbReference>
<dbReference type="InterPro" id="IPR027417">
    <property type="entry name" value="P-loop_NTPase"/>
</dbReference>
<dbReference type="InterPro" id="IPR008824">
    <property type="entry name" value="RuvB-like_N"/>
</dbReference>
<dbReference type="InterPro" id="IPR008823">
    <property type="entry name" value="RuvB_C"/>
</dbReference>
<dbReference type="InterPro" id="IPR036388">
    <property type="entry name" value="WH-like_DNA-bd_sf"/>
</dbReference>
<dbReference type="InterPro" id="IPR036390">
    <property type="entry name" value="WH_DNA-bd_sf"/>
</dbReference>
<dbReference type="NCBIfam" id="NF000868">
    <property type="entry name" value="PRK00080.1"/>
    <property type="match status" value="1"/>
</dbReference>
<dbReference type="NCBIfam" id="TIGR00635">
    <property type="entry name" value="ruvB"/>
    <property type="match status" value="1"/>
</dbReference>
<dbReference type="PANTHER" id="PTHR42848">
    <property type="match status" value="1"/>
</dbReference>
<dbReference type="PANTHER" id="PTHR42848:SF1">
    <property type="entry name" value="HOLLIDAY JUNCTION BRANCH MIGRATION COMPLEX SUBUNIT RUVB"/>
    <property type="match status" value="1"/>
</dbReference>
<dbReference type="Pfam" id="PF17864">
    <property type="entry name" value="AAA_lid_4"/>
    <property type="match status" value="1"/>
</dbReference>
<dbReference type="Pfam" id="PF05491">
    <property type="entry name" value="RuvB_C"/>
    <property type="match status" value="1"/>
</dbReference>
<dbReference type="Pfam" id="PF05496">
    <property type="entry name" value="RuvB_N"/>
    <property type="match status" value="1"/>
</dbReference>
<dbReference type="SMART" id="SM00382">
    <property type="entry name" value="AAA"/>
    <property type="match status" value="1"/>
</dbReference>
<dbReference type="SUPFAM" id="SSF52540">
    <property type="entry name" value="P-loop containing nucleoside triphosphate hydrolases"/>
    <property type="match status" value="1"/>
</dbReference>
<dbReference type="SUPFAM" id="SSF46785">
    <property type="entry name" value="Winged helix' DNA-binding domain"/>
    <property type="match status" value="1"/>
</dbReference>
<name>RUVB_HISS2</name>
<protein>
    <recommendedName>
        <fullName evidence="1">Holliday junction branch migration complex subunit RuvB</fullName>
        <ecNumber evidence="1">3.6.4.-</ecNumber>
    </recommendedName>
</protein>
<reference key="1">
    <citation type="submission" date="2008-02" db="EMBL/GenBank/DDBJ databases">
        <title>Complete sequence of Haemophilus somnus 2336.</title>
        <authorList>
            <consortium name="US DOE Joint Genome Institute"/>
            <person name="Siddaramappa S."/>
            <person name="Duncan A.J."/>
            <person name="Challacombe J.F."/>
            <person name="Rainey D."/>
            <person name="Gillaspy A.F."/>
            <person name="Carson M."/>
            <person name="Gipson J."/>
            <person name="Gipson M."/>
            <person name="Bruce D."/>
            <person name="Detter J.C."/>
            <person name="Han C.S."/>
            <person name="Land M."/>
            <person name="Tapia R."/>
            <person name="Thompson L.S."/>
            <person name="Orvis J."/>
            <person name="Zaitshik J."/>
            <person name="Barnes G."/>
            <person name="Brettin T.S."/>
            <person name="Dyer D.W."/>
            <person name="Inzana T.J."/>
        </authorList>
    </citation>
    <scope>NUCLEOTIDE SEQUENCE [LARGE SCALE GENOMIC DNA]</scope>
    <source>
        <strain>2336</strain>
    </source>
</reference>
<gene>
    <name evidence="1" type="primary">ruvB</name>
    <name type="ordered locus">HSM_0143</name>
</gene>
<accession>B0UVK4</accession>
<organism>
    <name type="scientific">Histophilus somni (strain 2336)</name>
    <name type="common">Haemophilus somnus</name>
    <dbReference type="NCBI Taxonomy" id="228400"/>
    <lineage>
        <taxon>Bacteria</taxon>
        <taxon>Pseudomonadati</taxon>
        <taxon>Pseudomonadota</taxon>
        <taxon>Gammaproteobacteria</taxon>
        <taxon>Pasteurellales</taxon>
        <taxon>Pasteurellaceae</taxon>
        <taxon>Histophilus</taxon>
    </lineage>
</organism>
<evidence type="ECO:0000255" key="1">
    <source>
        <dbReference type="HAMAP-Rule" id="MF_00016"/>
    </source>
</evidence>
<sequence length="335" mass="37250">MIEVDRIVSANAKVDDEYIDRAIRPKLLSDYIGQPQVREQMEIFIQAAKLRQDALDHLLIFGPPGLGKTTLANIVANEMGVNIRTTSGPVLEKAGDLAAMLTNLEPHDVLFIDEIHRLSPAIEEVLYPAMEDYQLDIMIGEGPAARSIKLDLPPFTLIGATTRAGSLTSPLRDRFGIVQRLEFYSVEDLASIVTRSAVCLQLEIDVEAGQEIACRSRGTPRIANRLLRRVRDYADVKNGGKITALIAQEALKMLDVDLAGFDFMDRKLLQAIIERFDGGPVGLDNLAAAIGEERDTIEDVLEPYLIQQGFLQRTPRGRIATSRTYRHFGLEQIEK</sequence>
<comment type="function">
    <text evidence="1">The RuvA-RuvB-RuvC complex processes Holliday junction (HJ) DNA during genetic recombination and DNA repair, while the RuvA-RuvB complex plays an important role in the rescue of blocked DNA replication forks via replication fork reversal (RFR). RuvA specifically binds to HJ cruciform DNA, conferring on it an open structure. The RuvB hexamer acts as an ATP-dependent pump, pulling dsDNA into and through the RuvAB complex. RuvB forms 2 homohexamers on either side of HJ DNA bound by 1 or 2 RuvA tetramers; 4 subunits per hexamer contact DNA at a time. Coordinated motions by a converter formed by DNA-disengaged RuvB subunits stimulates ATP hydrolysis and nucleotide exchange. Immobilization of the converter enables RuvB to convert the ATP-contained energy into a lever motion, pulling 2 nucleotides of DNA out of the RuvA tetramer per ATP hydrolyzed, thus driving DNA branch migration. The RuvB motors rotate together with the DNA substrate, which together with the progressing nucleotide cycle form the mechanistic basis for DNA recombination by continuous HJ branch migration. Branch migration allows RuvC to scan DNA until it finds its consensus sequence, where it cleaves and resolves cruciform DNA.</text>
</comment>
<comment type="catalytic activity">
    <reaction evidence="1">
        <text>ATP + H2O = ADP + phosphate + H(+)</text>
        <dbReference type="Rhea" id="RHEA:13065"/>
        <dbReference type="ChEBI" id="CHEBI:15377"/>
        <dbReference type="ChEBI" id="CHEBI:15378"/>
        <dbReference type="ChEBI" id="CHEBI:30616"/>
        <dbReference type="ChEBI" id="CHEBI:43474"/>
        <dbReference type="ChEBI" id="CHEBI:456216"/>
    </reaction>
</comment>
<comment type="subunit">
    <text evidence="1">Homohexamer. Forms an RuvA(8)-RuvB(12)-Holliday junction (HJ) complex. HJ DNA is sandwiched between 2 RuvA tetramers; dsDNA enters through RuvA and exits via RuvB. An RuvB hexamer assembles on each DNA strand where it exits the tetramer. Each RuvB hexamer is contacted by two RuvA subunits (via domain III) on 2 adjacent RuvB subunits; this complex drives branch migration. In the full resolvosome a probable DNA-RuvA(4)-RuvB(12)-RuvC(2) complex forms which resolves the HJ.</text>
</comment>
<comment type="subcellular location">
    <subcellularLocation>
        <location evidence="1">Cytoplasm</location>
    </subcellularLocation>
</comment>
<comment type="domain">
    <text evidence="1">Has 3 domains, the large (RuvB-L) and small ATPase (RuvB-S) domains and the C-terminal head (RuvB-H) domain. The head domain binds DNA, while the ATPase domains jointly bind ATP, ADP or are empty depending on the state of the subunit in the translocation cycle. During a single DNA translocation step the structure of each domain remains the same, but their relative positions change.</text>
</comment>
<comment type="similarity">
    <text evidence="1">Belongs to the RuvB family.</text>
</comment>